<protein>
    <recommendedName>
        <fullName evidence="1">Large ribosomal subunit protein uL6</fullName>
    </recommendedName>
    <alternativeName>
        <fullName evidence="2">50S ribosomal protein L6</fullName>
    </alternativeName>
</protein>
<keyword id="KW-0687">Ribonucleoprotein</keyword>
<keyword id="KW-0689">Ribosomal protein</keyword>
<keyword id="KW-0694">RNA-binding</keyword>
<keyword id="KW-0699">rRNA-binding</keyword>
<accession>B0V6W0</accession>
<gene>
    <name evidence="1" type="primary">rplF</name>
    <name type="ordered locus">ABAYE0423</name>
</gene>
<reference key="1">
    <citation type="journal article" date="2008" name="PLoS ONE">
        <title>Comparative analysis of Acinetobacters: three genomes for three lifestyles.</title>
        <authorList>
            <person name="Vallenet D."/>
            <person name="Nordmann P."/>
            <person name="Barbe V."/>
            <person name="Poirel L."/>
            <person name="Mangenot S."/>
            <person name="Bataille E."/>
            <person name="Dossat C."/>
            <person name="Gas S."/>
            <person name="Kreimeyer A."/>
            <person name="Lenoble P."/>
            <person name="Oztas S."/>
            <person name="Poulain J."/>
            <person name="Segurens B."/>
            <person name="Robert C."/>
            <person name="Abergel C."/>
            <person name="Claverie J.-M."/>
            <person name="Raoult D."/>
            <person name="Medigue C."/>
            <person name="Weissenbach J."/>
            <person name="Cruveiller S."/>
        </authorList>
    </citation>
    <scope>NUCLEOTIDE SEQUENCE [LARGE SCALE GENOMIC DNA]</scope>
    <source>
        <strain>AYE</strain>
    </source>
</reference>
<dbReference type="EMBL" id="CU459141">
    <property type="protein sequence ID" value="CAM85397.1"/>
    <property type="molecule type" value="Genomic_DNA"/>
</dbReference>
<dbReference type="RefSeq" id="WP_000091932.1">
    <property type="nucleotide sequence ID" value="NZ_JBDGFB010000011.1"/>
</dbReference>
<dbReference type="SMR" id="B0V6W0"/>
<dbReference type="EnsemblBacteria" id="CAM85397">
    <property type="protein sequence ID" value="CAM85397"/>
    <property type="gene ID" value="ABAYE0423"/>
</dbReference>
<dbReference type="GeneID" id="92895302"/>
<dbReference type="KEGG" id="aby:ABAYE0423"/>
<dbReference type="HOGENOM" id="CLU_065464_1_2_6"/>
<dbReference type="GO" id="GO:0022625">
    <property type="term" value="C:cytosolic large ribosomal subunit"/>
    <property type="evidence" value="ECO:0007669"/>
    <property type="project" value="TreeGrafter"/>
</dbReference>
<dbReference type="GO" id="GO:0019843">
    <property type="term" value="F:rRNA binding"/>
    <property type="evidence" value="ECO:0007669"/>
    <property type="project" value="UniProtKB-UniRule"/>
</dbReference>
<dbReference type="GO" id="GO:0003735">
    <property type="term" value="F:structural constituent of ribosome"/>
    <property type="evidence" value="ECO:0007669"/>
    <property type="project" value="InterPro"/>
</dbReference>
<dbReference type="GO" id="GO:0002181">
    <property type="term" value="P:cytoplasmic translation"/>
    <property type="evidence" value="ECO:0007669"/>
    <property type="project" value="TreeGrafter"/>
</dbReference>
<dbReference type="FunFam" id="3.90.930.12:FF:000001">
    <property type="entry name" value="50S ribosomal protein L6"/>
    <property type="match status" value="1"/>
</dbReference>
<dbReference type="FunFam" id="3.90.930.12:FF:000002">
    <property type="entry name" value="50S ribosomal protein L6"/>
    <property type="match status" value="1"/>
</dbReference>
<dbReference type="Gene3D" id="3.90.930.12">
    <property type="entry name" value="Ribosomal protein L6, alpha-beta domain"/>
    <property type="match status" value="2"/>
</dbReference>
<dbReference type="HAMAP" id="MF_01365_B">
    <property type="entry name" value="Ribosomal_uL6_B"/>
    <property type="match status" value="1"/>
</dbReference>
<dbReference type="InterPro" id="IPR000702">
    <property type="entry name" value="Ribosomal_uL6-like"/>
</dbReference>
<dbReference type="InterPro" id="IPR036789">
    <property type="entry name" value="Ribosomal_uL6-like_a/b-dom_sf"/>
</dbReference>
<dbReference type="InterPro" id="IPR020040">
    <property type="entry name" value="Ribosomal_uL6_a/b-dom"/>
</dbReference>
<dbReference type="InterPro" id="IPR019906">
    <property type="entry name" value="Ribosomal_uL6_bac-type"/>
</dbReference>
<dbReference type="InterPro" id="IPR002358">
    <property type="entry name" value="Ribosomal_uL6_CS"/>
</dbReference>
<dbReference type="NCBIfam" id="TIGR03654">
    <property type="entry name" value="L6_bact"/>
    <property type="match status" value="1"/>
</dbReference>
<dbReference type="PANTHER" id="PTHR11655">
    <property type="entry name" value="60S/50S RIBOSOMAL PROTEIN L6/L9"/>
    <property type="match status" value="1"/>
</dbReference>
<dbReference type="PANTHER" id="PTHR11655:SF14">
    <property type="entry name" value="LARGE RIBOSOMAL SUBUNIT PROTEIN UL6M"/>
    <property type="match status" value="1"/>
</dbReference>
<dbReference type="Pfam" id="PF00347">
    <property type="entry name" value="Ribosomal_L6"/>
    <property type="match status" value="2"/>
</dbReference>
<dbReference type="PIRSF" id="PIRSF002162">
    <property type="entry name" value="Ribosomal_L6"/>
    <property type="match status" value="1"/>
</dbReference>
<dbReference type="PRINTS" id="PR00059">
    <property type="entry name" value="RIBOSOMALL6"/>
</dbReference>
<dbReference type="SUPFAM" id="SSF56053">
    <property type="entry name" value="Ribosomal protein L6"/>
    <property type="match status" value="2"/>
</dbReference>
<dbReference type="PROSITE" id="PS00525">
    <property type="entry name" value="RIBOSOMAL_L6_1"/>
    <property type="match status" value="1"/>
</dbReference>
<evidence type="ECO:0000255" key="1">
    <source>
        <dbReference type="HAMAP-Rule" id="MF_01365"/>
    </source>
</evidence>
<evidence type="ECO:0000305" key="2"/>
<sequence>MSRVAKAPVTVPNGVTVTQNGRQVEVKGSKGTLSFNLHALVELKQEEGKLQLAPAKESKDAWMQAGTARAVLNNLVKGVSEGFERKLQLVGVGYKAAVKGTVVNLNLGYSHPIDYALPEGVTAETPTATEIILKSANKQLLGQVAAEIRAYRSPEPYKGKGVRYSDEVILRKEAKKK</sequence>
<proteinExistence type="inferred from homology"/>
<name>RL6_ACIBY</name>
<organism>
    <name type="scientific">Acinetobacter baumannii (strain AYE)</name>
    <dbReference type="NCBI Taxonomy" id="509173"/>
    <lineage>
        <taxon>Bacteria</taxon>
        <taxon>Pseudomonadati</taxon>
        <taxon>Pseudomonadota</taxon>
        <taxon>Gammaproteobacteria</taxon>
        <taxon>Moraxellales</taxon>
        <taxon>Moraxellaceae</taxon>
        <taxon>Acinetobacter</taxon>
        <taxon>Acinetobacter calcoaceticus/baumannii complex</taxon>
    </lineage>
</organism>
<feature type="chain" id="PRO_1000143933" description="Large ribosomal subunit protein uL6">
    <location>
        <begin position="1"/>
        <end position="177"/>
    </location>
</feature>
<comment type="function">
    <text evidence="1">This protein binds to the 23S rRNA, and is important in its secondary structure. It is located near the subunit interface in the base of the L7/L12 stalk, and near the tRNA binding site of the peptidyltransferase center.</text>
</comment>
<comment type="subunit">
    <text evidence="1">Part of the 50S ribosomal subunit.</text>
</comment>
<comment type="similarity">
    <text evidence="1">Belongs to the universal ribosomal protein uL6 family.</text>
</comment>